<sequence>MQNAPESVLNALVPMVVEQTAKGERSYDIYSRLLKERVIFLVGQVEEHMANLIVAQLLFLESESPDKDIYLYINSPGGSVTAGMAIYDTMQFIKPNVSTVCIGQAASMGAFLLAGGAKGKRHCLPNSRVMIHQPLGGFQGQASDIAIHAQEILGIKNKLNQMLADHTGQPLEVIERDTDRDNFMSATEAAEYGLVDSVLDKRG</sequence>
<name>CLPP_SHELP</name>
<accession>A3QFX6</accession>
<reference key="1">
    <citation type="submission" date="2007-03" db="EMBL/GenBank/DDBJ databases">
        <title>Complete sequence of Shewanella loihica PV-4.</title>
        <authorList>
            <consortium name="US DOE Joint Genome Institute"/>
            <person name="Copeland A."/>
            <person name="Lucas S."/>
            <person name="Lapidus A."/>
            <person name="Barry K."/>
            <person name="Detter J.C."/>
            <person name="Glavina del Rio T."/>
            <person name="Hammon N."/>
            <person name="Israni S."/>
            <person name="Dalin E."/>
            <person name="Tice H."/>
            <person name="Pitluck S."/>
            <person name="Chain P."/>
            <person name="Malfatti S."/>
            <person name="Shin M."/>
            <person name="Vergez L."/>
            <person name="Schmutz J."/>
            <person name="Larimer F."/>
            <person name="Land M."/>
            <person name="Hauser L."/>
            <person name="Kyrpides N."/>
            <person name="Mikhailova N."/>
            <person name="Romine M.F."/>
            <person name="Serres G."/>
            <person name="Fredrickson J."/>
            <person name="Tiedje J."/>
            <person name="Richardson P."/>
        </authorList>
    </citation>
    <scope>NUCLEOTIDE SEQUENCE [LARGE SCALE GENOMIC DNA]</scope>
    <source>
        <strain>ATCC BAA-1088 / PV-4</strain>
    </source>
</reference>
<dbReference type="EC" id="3.4.21.92" evidence="1"/>
<dbReference type="EMBL" id="CP000606">
    <property type="protein sequence ID" value="ABO24374.1"/>
    <property type="molecule type" value="Genomic_DNA"/>
</dbReference>
<dbReference type="RefSeq" id="WP_011866305.1">
    <property type="nucleotide sequence ID" value="NC_009092.1"/>
</dbReference>
<dbReference type="SMR" id="A3QFX6"/>
<dbReference type="STRING" id="323850.Shew_2508"/>
<dbReference type="MEROPS" id="S14.001"/>
<dbReference type="KEGG" id="slo:Shew_2508"/>
<dbReference type="eggNOG" id="COG0740">
    <property type="taxonomic scope" value="Bacteria"/>
</dbReference>
<dbReference type="HOGENOM" id="CLU_058707_3_2_6"/>
<dbReference type="OrthoDB" id="9802800at2"/>
<dbReference type="Proteomes" id="UP000001558">
    <property type="component" value="Chromosome"/>
</dbReference>
<dbReference type="GO" id="GO:0005737">
    <property type="term" value="C:cytoplasm"/>
    <property type="evidence" value="ECO:0007669"/>
    <property type="project" value="UniProtKB-SubCell"/>
</dbReference>
<dbReference type="GO" id="GO:0009368">
    <property type="term" value="C:endopeptidase Clp complex"/>
    <property type="evidence" value="ECO:0007669"/>
    <property type="project" value="TreeGrafter"/>
</dbReference>
<dbReference type="GO" id="GO:0004176">
    <property type="term" value="F:ATP-dependent peptidase activity"/>
    <property type="evidence" value="ECO:0007669"/>
    <property type="project" value="InterPro"/>
</dbReference>
<dbReference type="GO" id="GO:0051117">
    <property type="term" value="F:ATPase binding"/>
    <property type="evidence" value="ECO:0007669"/>
    <property type="project" value="TreeGrafter"/>
</dbReference>
<dbReference type="GO" id="GO:0004252">
    <property type="term" value="F:serine-type endopeptidase activity"/>
    <property type="evidence" value="ECO:0007669"/>
    <property type="project" value="UniProtKB-UniRule"/>
</dbReference>
<dbReference type="GO" id="GO:0006515">
    <property type="term" value="P:protein quality control for misfolded or incompletely synthesized proteins"/>
    <property type="evidence" value="ECO:0007669"/>
    <property type="project" value="TreeGrafter"/>
</dbReference>
<dbReference type="CDD" id="cd07017">
    <property type="entry name" value="S14_ClpP_2"/>
    <property type="match status" value="1"/>
</dbReference>
<dbReference type="FunFam" id="3.90.226.10:FF:000001">
    <property type="entry name" value="ATP-dependent Clp protease proteolytic subunit"/>
    <property type="match status" value="1"/>
</dbReference>
<dbReference type="Gene3D" id="3.90.226.10">
    <property type="entry name" value="2-enoyl-CoA Hydratase, Chain A, domain 1"/>
    <property type="match status" value="1"/>
</dbReference>
<dbReference type="HAMAP" id="MF_00444">
    <property type="entry name" value="ClpP"/>
    <property type="match status" value="1"/>
</dbReference>
<dbReference type="InterPro" id="IPR001907">
    <property type="entry name" value="ClpP"/>
</dbReference>
<dbReference type="InterPro" id="IPR029045">
    <property type="entry name" value="ClpP/crotonase-like_dom_sf"/>
</dbReference>
<dbReference type="InterPro" id="IPR023562">
    <property type="entry name" value="ClpP/TepA"/>
</dbReference>
<dbReference type="InterPro" id="IPR033135">
    <property type="entry name" value="ClpP_His_AS"/>
</dbReference>
<dbReference type="InterPro" id="IPR018215">
    <property type="entry name" value="ClpP_Ser_AS"/>
</dbReference>
<dbReference type="NCBIfam" id="TIGR00493">
    <property type="entry name" value="clpP"/>
    <property type="match status" value="1"/>
</dbReference>
<dbReference type="NCBIfam" id="NF001368">
    <property type="entry name" value="PRK00277.1"/>
    <property type="match status" value="1"/>
</dbReference>
<dbReference type="NCBIfam" id="NF009205">
    <property type="entry name" value="PRK12553.1"/>
    <property type="match status" value="1"/>
</dbReference>
<dbReference type="PANTHER" id="PTHR10381">
    <property type="entry name" value="ATP-DEPENDENT CLP PROTEASE PROTEOLYTIC SUBUNIT"/>
    <property type="match status" value="1"/>
</dbReference>
<dbReference type="PANTHER" id="PTHR10381:SF70">
    <property type="entry name" value="ATP-DEPENDENT CLP PROTEASE PROTEOLYTIC SUBUNIT"/>
    <property type="match status" value="1"/>
</dbReference>
<dbReference type="Pfam" id="PF00574">
    <property type="entry name" value="CLP_protease"/>
    <property type="match status" value="1"/>
</dbReference>
<dbReference type="PRINTS" id="PR00127">
    <property type="entry name" value="CLPPROTEASEP"/>
</dbReference>
<dbReference type="SUPFAM" id="SSF52096">
    <property type="entry name" value="ClpP/crotonase"/>
    <property type="match status" value="1"/>
</dbReference>
<dbReference type="PROSITE" id="PS00382">
    <property type="entry name" value="CLP_PROTEASE_HIS"/>
    <property type="match status" value="1"/>
</dbReference>
<dbReference type="PROSITE" id="PS00381">
    <property type="entry name" value="CLP_PROTEASE_SER"/>
    <property type="match status" value="1"/>
</dbReference>
<keyword id="KW-0963">Cytoplasm</keyword>
<keyword id="KW-0378">Hydrolase</keyword>
<keyword id="KW-0645">Protease</keyword>
<keyword id="KW-1185">Reference proteome</keyword>
<keyword id="KW-0720">Serine protease</keyword>
<proteinExistence type="inferred from homology"/>
<organism>
    <name type="scientific">Shewanella loihica (strain ATCC BAA-1088 / PV-4)</name>
    <dbReference type="NCBI Taxonomy" id="323850"/>
    <lineage>
        <taxon>Bacteria</taxon>
        <taxon>Pseudomonadati</taxon>
        <taxon>Pseudomonadota</taxon>
        <taxon>Gammaproteobacteria</taxon>
        <taxon>Alteromonadales</taxon>
        <taxon>Shewanellaceae</taxon>
        <taxon>Shewanella</taxon>
    </lineage>
</organism>
<feature type="chain" id="PRO_1000072346" description="ATP-dependent Clp protease proteolytic subunit">
    <location>
        <begin position="1"/>
        <end position="203"/>
    </location>
</feature>
<feature type="active site" description="Nucleophile" evidence="1">
    <location>
        <position position="107"/>
    </location>
</feature>
<feature type="active site" evidence="1">
    <location>
        <position position="132"/>
    </location>
</feature>
<gene>
    <name evidence="1" type="primary">clpP</name>
    <name type="ordered locus">Shew_2508</name>
</gene>
<comment type="function">
    <text evidence="1">Cleaves peptides in various proteins in a process that requires ATP hydrolysis. Has a chymotrypsin-like activity. Plays a major role in the degradation of misfolded proteins.</text>
</comment>
<comment type="catalytic activity">
    <reaction evidence="1">
        <text>Hydrolysis of proteins to small peptides in the presence of ATP and magnesium. alpha-casein is the usual test substrate. In the absence of ATP, only oligopeptides shorter than five residues are hydrolyzed (such as succinyl-Leu-Tyr-|-NHMec, and Leu-Tyr-Leu-|-Tyr-Trp, in which cleavage of the -Tyr-|-Leu- and -Tyr-|-Trp bonds also occurs).</text>
        <dbReference type="EC" id="3.4.21.92"/>
    </reaction>
</comment>
<comment type="subunit">
    <text evidence="1">Fourteen ClpP subunits assemble into 2 heptameric rings which stack back to back to give a disk-like structure with a central cavity, resembling the structure of eukaryotic proteasomes.</text>
</comment>
<comment type="subcellular location">
    <subcellularLocation>
        <location evidence="1">Cytoplasm</location>
    </subcellularLocation>
</comment>
<comment type="similarity">
    <text evidence="1">Belongs to the peptidase S14 family.</text>
</comment>
<protein>
    <recommendedName>
        <fullName evidence="1">ATP-dependent Clp protease proteolytic subunit</fullName>
        <ecNumber evidence="1">3.4.21.92</ecNumber>
    </recommendedName>
    <alternativeName>
        <fullName evidence="1">Endopeptidase Clp</fullName>
    </alternativeName>
</protein>
<evidence type="ECO:0000255" key="1">
    <source>
        <dbReference type="HAMAP-Rule" id="MF_00444"/>
    </source>
</evidence>